<name>PEPQ_XANCP</name>
<gene>
    <name evidence="1" type="primary">pepQ</name>
    <name type="ordered locus">XCC3257</name>
</gene>
<accession>Q8P5S9</accession>
<dbReference type="EC" id="3.4.13.9" evidence="1"/>
<dbReference type="EMBL" id="AE008922">
    <property type="protein sequence ID" value="AAM42527.1"/>
    <property type="molecule type" value="Genomic_DNA"/>
</dbReference>
<dbReference type="RefSeq" id="NP_638603.1">
    <property type="nucleotide sequence ID" value="NC_003902.1"/>
</dbReference>
<dbReference type="RefSeq" id="WP_011038359.1">
    <property type="nucleotide sequence ID" value="NC_003902.1"/>
</dbReference>
<dbReference type="SMR" id="Q8P5S9"/>
<dbReference type="STRING" id="190485.XCC3257"/>
<dbReference type="MEROPS" id="M24.003"/>
<dbReference type="EnsemblBacteria" id="AAM42527">
    <property type="protein sequence ID" value="AAM42527"/>
    <property type="gene ID" value="XCC3257"/>
</dbReference>
<dbReference type="KEGG" id="xcc:XCC3257"/>
<dbReference type="PATRIC" id="fig|190485.4.peg.3481"/>
<dbReference type="eggNOG" id="COG0006">
    <property type="taxonomic scope" value="Bacteria"/>
</dbReference>
<dbReference type="HOGENOM" id="CLU_050675_0_0_6"/>
<dbReference type="OrthoDB" id="9806388at2"/>
<dbReference type="Proteomes" id="UP000001010">
    <property type="component" value="Chromosome"/>
</dbReference>
<dbReference type="GO" id="GO:0005829">
    <property type="term" value="C:cytosol"/>
    <property type="evidence" value="ECO:0000318"/>
    <property type="project" value="GO_Central"/>
</dbReference>
<dbReference type="GO" id="GO:0004177">
    <property type="term" value="F:aminopeptidase activity"/>
    <property type="evidence" value="ECO:0000318"/>
    <property type="project" value="GO_Central"/>
</dbReference>
<dbReference type="GO" id="GO:0046872">
    <property type="term" value="F:metal ion binding"/>
    <property type="evidence" value="ECO:0007669"/>
    <property type="project" value="UniProtKB-KW"/>
</dbReference>
<dbReference type="GO" id="GO:0008235">
    <property type="term" value="F:metalloexopeptidase activity"/>
    <property type="evidence" value="ECO:0007669"/>
    <property type="project" value="UniProtKB-UniRule"/>
</dbReference>
<dbReference type="GO" id="GO:0016795">
    <property type="term" value="F:phosphoric triester hydrolase activity"/>
    <property type="evidence" value="ECO:0007669"/>
    <property type="project" value="InterPro"/>
</dbReference>
<dbReference type="GO" id="GO:0102009">
    <property type="term" value="F:proline dipeptidase activity"/>
    <property type="evidence" value="ECO:0007669"/>
    <property type="project" value="UniProtKB-EC"/>
</dbReference>
<dbReference type="GO" id="GO:0006508">
    <property type="term" value="P:proteolysis"/>
    <property type="evidence" value="ECO:0000318"/>
    <property type="project" value="GO_Central"/>
</dbReference>
<dbReference type="CDD" id="cd01087">
    <property type="entry name" value="Prolidase"/>
    <property type="match status" value="1"/>
</dbReference>
<dbReference type="Gene3D" id="3.90.230.10">
    <property type="entry name" value="Creatinase/methionine aminopeptidase superfamily"/>
    <property type="match status" value="1"/>
</dbReference>
<dbReference type="Gene3D" id="3.40.350.10">
    <property type="entry name" value="Creatinase/prolidase N-terminal domain"/>
    <property type="match status" value="1"/>
</dbReference>
<dbReference type="HAMAP" id="MF_01279">
    <property type="entry name" value="X_Pro_dipeptid"/>
    <property type="match status" value="1"/>
</dbReference>
<dbReference type="InterPro" id="IPR029149">
    <property type="entry name" value="Creatin/AminoP/Spt16_N"/>
</dbReference>
<dbReference type="InterPro" id="IPR036005">
    <property type="entry name" value="Creatinase/aminopeptidase-like"/>
</dbReference>
<dbReference type="InterPro" id="IPR048819">
    <property type="entry name" value="PepQ_N"/>
</dbReference>
<dbReference type="InterPro" id="IPR000994">
    <property type="entry name" value="Pept_M24"/>
</dbReference>
<dbReference type="InterPro" id="IPR001131">
    <property type="entry name" value="Peptidase_M24B_aminopep-P_CS"/>
</dbReference>
<dbReference type="InterPro" id="IPR052433">
    <property type="entry name" value="X-Pro_dipept-like"/>
</dbReference>
<dbReference type="InterPro" id="IPR022846">
    <property type="entry name" value="X_Pro_dipept"/>
</dbReference>
<dbReference type="NCBIfam" id="NF010133">
    <property type="entry name" value="PRK13607.1"/>
    <property type="match status" value="1"/>
</dbReference>
<dbReference type="PANTHER" id="PTHR43226">
    <property type="entry name" value="XAA-PRO AMINOPEPTIDASE 3"/>
    <property type="match status" value="1"/>
</dbReference>
<dbReference type="PANTHER" id="PTHR43226:SF8">
    <property type="entry name" value="XAA-PRO DIPEPTIDASE"/>
    <property type="match status" value="1"/>
</dbReference>
<dbReference type="Pfam" id="PF21216">
    <property type="entry name" value="PepQ_N"/>
    <property type="match status" value="1"/>
</dbReference>
<dbReference type="Pfam" id="PF00557">
    <property type="entry name" value="Peptidase_M24"/>
    <property type="match status" value="1"/>
</dbReference>
<dbReference type="SUPFAM" id="SSF55920">
    <property type="entry name" value="Creatinase/aminopeptidase"/>
    <property type="match status" value="1"/>
</dbReference>
<dbReference type="PROSITE" id="PS00491">
    <property type="entry name" value="PROLINE_PEPTIDASE"/>
    <property type="match status" value="1"/>
</dbReference>
<comment type="function">
    <text evidence="1">Splits dipeptides with a prolyl residue in the C-terminal position.</text>
</comment>
<comment type="catalytic activity">
    <reaction evidence="1">
        <text>Xaa-L-Pro dipeptide + H2O = an L-alpha-amino acid + L-proline</text>
        <dbReference type="Rhea" id="RHEA:76407"/>
        <dbReference type="ChEBI" id="CHEBI:15377"/>
        <dbReference type="ChEBI" id="CHEBI:59869"/>
        <dbReference type="ChEBI" id="CHEBI:60039"/>
        <dbReference type="ChEBI" id="CHEBI:195196"/>
        <dbReference type="EC" id="3.4.13.9"/>
    </reaction>
</comment>
<comment type="cofactor">
    <cofactor evidence="1">
        <name>Mn(2+)</name>
        <dbReference type="ChEBI" id="CHEBI:29035"/>
    </cofactor>
    <text evidence="1">Binds 2 manganese ions per subunit.</text>
</comment>
<comment type="similarity">
    <text evidence="1">Belongs to the peptidase M24B family. Bacterial-type prolidase subfamily.</text>
</comment>
<feature type="chain" id="PRO_0000303873" description="Xaa-Pro dipeptidase">
    <location>
        <begin position="1"/>
        <end position="441"/>
    </location>
</feature>
<feature type="binding site" evidence="1">
    <location>
        <position position="244"/>
    </location>
    <ligand>
        <name>Mn(2+)</name>
        <dbReference type="ChEBI" id="CHEBI:29035"/>
        <label>2</label>
    </ligand>
</feature>
<feature type="binding site" evidence="1">
    <location>
        <position position="255"/>
    </location>
    <ligand>
        <name>Mn(2+)</name>
        <dbReference type="ChEBI" id="CHEBI:29035"/>
        <label>1</label>
    </ligand>
</feature>
<feature type="binding site" evidence="1">
    <location>
        <position position="255"/>
    </location>
    <ligand>
        <name>Mn(2+)</name>
        <dbReference type="ChEBI" id="CHEBI:29035"/>
        <label>2</label>
    </ligand>
</feature>
<feature type="binding site" evidence="1">
    <location>
        <position position="336"/>
    </location>
    <ligand>
        <name>Mn(2+)</name>
        <dbReference type="ChEBI" id="CHEBI:29035"/>
        <label>1</label>
    </ligand>
</feature>
<feature type="binding site" evidence="1">
    <location>
        <position position="381"/>
    </location>
    <ligand>
        <name>Mn(2+)</name>
        <dbReference type="ChEBI" id="CHEBI:29035"/>
        <label>1</label>
    </ligand>
</feature>
<feature type="binding site" evidence="1">
    <location>
        <position position="420"/>
    </location>
    <ligand>
        <name>Mn(2+)</name>
        <dbReference type="ChEBI" id="CHEBI:29035"/>
        <label>1</label>
    </ligand>
</feature>
<feature type="binding site" evidence="1">
    <location>
        <position position="420"/>
    </location>
    <ligand>
        <name>Mn(2+)</name>
        <dbReference type="ChEBI" id="CHEBI:29035"/>
        <label>2</label>
    </ligand>
</feature>
<sequence>MTQPSLSVLYSDHLRTLTARADQALQRGGFDHLVIPSGTTHYQLFDDRDYPFAVNPQFKAWVPLTRMPHSWLVYTPGKRPTVIFYQPFDYWHVVPDAPSGWWVEHCDIHIIRTPEAALPLLPARTERCAILGEAASALGACVPNNPAAVLDFLDYQRAFKTPYELAVMRLAQQLAVRGHRAAEAAFRAGQSEFGIHMAYCSAVGQDANELPYGNIIALNEHGAVLHYTELGRQAPQPLRSFLIDAGASAHGYASDITRTYAADAGSEFQALIDAVDAAQLRMGNAVRAGMDYKQLHVDAHLSLMGILHDFGIITVSPEAALATGVSAAFFPHGLGHLIGLQVHDVAGFAASDRGGRIERPDGHPYLRLTRVLEPGMVVTIEPGVYFIDMLLDEVKKNGHAASVNWDRVAQFAPYGGIRIEDEVVCTDGDPENLTRPVFAAP</sequence>
<keyword id="KW-0224">Dipeptidase</keyword>
<keyword id="KW-0378">Hydrolase</keyword>
<keyword id="KW-0464">Manganese</keyword>
<keyword id="KW-0479">Metal-binding</keyword>
<keyword id="KW-0482">Metalloprotease</keyword>
<keyword id="KW-0645">Protease</keyword>
<keyword id="KW-1185">Reference proteome</keyword>
<reference key="1">
    <citation type="journal article" date="2002" name="Nature">
        <title>Comparison of the genomes of two Xanthomonas pathogens with differing host specificities.</title>
        <authorList>
            <person name="da Silva A.C.R."/>
            <person name="Ferro J.A."/>
            <person name="Reinach F.C."/>
            <person name="Farah C.S."/>
            <person name="Furlan L.R."/>
            <person name="Quaggio R.B."/>
            <person name="Monteiro-Vitorello C.B."/>
            <person name="Van Sluys M.A."/>
            <person name="Almeida N.F. Jr."/>
            <person name="Alves L.M.C."/>
            <person name="do Amaral A.M."/>
            <person name="Bertolini M.C."/>
            <person name="Camargo L.E.A."/>
            <person name="Camarotte G."/>
            <person name="Cannavan F."/>
            <person name="Cardozo J."/>
            <person name="Chambergo F."/>
            <person name="Ciapina L.P."/>
            <person name="Cicarelli R.M.B."/>
            <person name="Coutinho L.L."/>
            <person name="Cursino-Santos J.R."/>
            <person name="El-Dorry H."/>
            <person name="Faria J.B."/>
            <person name="Ferreira A.J.S."/>
            <person name="Ferreira R.C.C."/>
            <person name="Ferro M.I.T."/>
            <person name="Formighieri E.F."/>
            <person name="Franco M.C."/>
            <person name="Greggio C.C."/>
            <person name="Gruber A."/>
            <person name="Katsuyama A.M."/>
            <person name="Kishi L.T."/>
            <person name="Leite R.P."/>
            <person name="Lemos E.G.M."/>
            <person name="Lemos M.V.F."/>
            <person name="Locali E.C."/>
            <person name="Machado M.A."/>
            <person name="Madeira A.M.B.N."/>
            <person name="Martinez-Rossi N.M."/>
            <person name="Martins E.C."/>
            <person name="Meidanis J."/>
            <person name="Menck C.F.M."/>
            <person name="Miyaki C.Y."/>
            <person name="Moon D.H."/>
            <person name="Moreira L.M."/>
            <person name="Novo M.T.M."/>
            <person name="Okura V.K."/>
            <person name="Oliveira M.C."/>
            <person name="Oliveira V.R."/>
            <person name="Pereira H.A."/>
            <person name="Rossi A."/>
            <person name="Sena J.A.D."/>
            <person name="Silva C."/>
            <person name="de Souza R.F."/>
            <person name="Spinola L.A.F."/>
            <person name="Takita M.A."/>
            <person name="Tamura R.E."/>
            <person name="Teixeira E.C."/>
            <person name="Tezza R.I.D."/>
            <person name="Trindade dos Santos M."/>
            <person name="Truffi D."/>
            <person name="Tsai S.M."/>
            <person name="White F.F."/>
            <person name="Setubal J.C."/>
            <person name="Kitajima J.P."/>
        </authorList>
    </citation>
    <scope>NUCLEOTIDE SEQUENCE [LARGE SCALE GENOMIC DNA]</scope>
    <source>
        <strain>ATCC 33913 / DSM 3586 / NCPPB 528 / LMG 568 / P 25</strain>
    </source>
</reference>
<protein>
    <recommendedName>
        <fullName evidence="1">Xaa-Pro dipeptidase</fullName>
        <shortName evidence="1">X-Pro dipeptidase</shortName>
        <ecNumber evidence="1">3.4.13.9</ecNumber>
    </recommendedName>
    <alternativeName>
        <fullName evidence="1">Imidodipeptidase</fullName>
    </alternativeName>
    <alternativeName>
        <fullName evidence="1">Proline dipeptidase</fullName>
        <shortName evidence="1">Prolidase</shortName>
    </alternativeName>
</protein>
<organism>
    <name type="scientific">Xanthomonas campestris pv. campestris (strain ATCC 33913 / DSM 3586 / NCPPB 528 / LMG 568 / P 25)</name>
    <dbReference type="NCBI Taxonomy" id="190485"/>
    <lineage>
        <taxon>Bacteria</taxon>
        <taxon>Pseudomonadati</taxon>
        <taxon>Pseudomonadota</taxon>
        <taxon>Gammaproteobacteria</taxon>
        <taxon>Lysobacterales</taxon>
        <taxon>Lysobacteraceae</taxon>
        <taxon>Xanthomonas</taxon>
    </lineage>
</organism>
<evidence type="ECO:0000255" key="1">
    <source>
        <dbReference type="HAMAP-Rule" id="MF_01279"/>
    </source>
</evidence>
<proteinExistence type="inferred from homology"/>